<proteinExistence type="evidence at protein level"/>
<dbReference type="EMBL" id="Z73234">
    <property type="protein sequence ID" value="CAA97597.1"/>
    <property type="molecule type" value="Genomic_DNA"/>
</dbReference>
<dbReference type="EMBL" id="AL009126">
    <property type="protein sequence ID" value="CAB13680.1"/>
    <property type="molecule type" value="Genomic_DNA"/>
</dbReference>
<dbReference type="EMBL" id="X87845">
    <property type="protein sequence ID" value="CAA61119.1"/>
    <property type="molecule type" value="Genomic_DNA"/>
</dbReference>
<dbReference type="PIR" id="D69891">
    <property type="entry name" value="D69891"/>
</dbReference>
<dbReference type="RefSeq" id="NP_389679.1">
    <property type="nucleotide sequence ID" value="NC_000964.3"/>
</dbReference>
<dbReference type="RefSeq" id="WP_003231580.1">
    <property type="nucleotide sequence ID" value="NZ_OZ025638.1"/>
</dbReference>
<dbReference type="SMR" id="P45711"/>
<dbReference type="FunCoup" id="P45711">
    <property type="interactions" value="19"/>
</dbReference>
<dbReference type="STRING" id="224308.BSU17960"/>
<dbReference type="PaxDb" id="224308-BSU17960"/>
<dbReference type="DNASU" id="938820"/>
<dbReference type="EnsemblBacteria" id="CAB13680">
    <property type="protein sequence ID" value="CAB13680"/>
    <property type="gene ID" value="BSU_17960"/>
</dbReference>
<dbReference type="GeneID" id="938820"/>
<dbReference type="KEGG" id="bsu:BSU17960"/>
<dbReference type="PATRIC" id="fig|224308.179.peg.1957"/>
<dbReference type="eggNOG" id="ENOG502ZPID">
    <property type="taxonomic scope" value="Bacteria"/>
</dbReference>
<dbReference type="InParanoid" id="P45711"/>
<dbReference type="OrthoDB" id="2399525at2"/>
<dbReference type="BioCyc" id="BSUB:BSU17960-MONOMER"/>
<dbReference type="Proteomes" id="UP000001570">
    <property type="component" value="Chromosome"/>
</dbReference>
<dbReference type="GO" id="GO:0005886">
    <property type="term" value="C:plasma membrane"/>
    <property type="evidence" value="ECO:0007669"/>
    <property type="project" value="UniProtKB-SubCell"/>
</dbReference>
<dbReference type="InterPro" id="IPR020203">
    <property type="entry name" value="YneK"/>
</dbReference>
<dbReference type="Pfam" id="PF11084">
    <property type="entry name" value="DUF2621"/>
    <property type="match status" value="1"/>
</dbReference>
<reference key="1">
    <citation type="journal article" date="1996" name="Microbiology">
        <title>New genes in the 170 degrees region of the Bacillus subtilis genome encode DNA gyrase subunits, a thioredoxin, a xylanase and an amino acid transporter.</title>
        <authorList>
            <person name="Rose M."/>
            <person name="Entian K.-D."/>
        </authorList>
    </citation>
    <scope>NUCLEOTIDE SEQUENCE [GENOMIC DNA]</scope>
    <source>
        <strain>168</strain>
    </source>
</reference>
<reference key="2">
    <citation type="journal article" date="1997" name="Nature">
        <title>The complete genome sequence of the Gram-positive bacterium Bacillus subtilis.</title>
        <authorList>
            <person name="Kunst F."/>
            <person name="Ogasawara N."/>
            <person name="Moszer I."/>
            <person name="Albertini A.M."/>
            <person name="Alloni G."/>
            <person name="Azevedo V."/>
            <person name="Bertero M.G."/>
            <person name="Bessieres P."/>
            <person name="Bolotin A."/>
            <person name="Borchert S."/>
            <person name="Borriss R."/>
            <person name="Boursier L."/>
            <person name="Brans A."/>
            <person name="Braun M."/>
            <person name="Brignell S.C."/>
            <person name="Bron S."/>
            <person name="Brouillet S."/>
            <person name="Bruschi C.V."/>
            <person name="Caldwell B."/>
            <person name="Capuano V."/>
            <person name="Carter N.M."/>
            <person name="Choi S.-K."/>
            <person name="Codani J.-J."/>
            <person name="Connerton I.F."/>
            <person name="Cummings N.J."/>
            <person name="Daniel R.A."/>
            <person name="Denizot F."/>
            <person name="Devine K.M."/>
            <person name="Duesterhoeft A."/>
            <person name="Ehrlich S.D."/>
            <person name="Emmerson P.T."/>
            <person name="Entian K.-D."/>
            <person name="Errington J."/>
            <person name="Fabret C."/>
            <person name="Ferrari E."/>
            <person name="Foulger D."/>
            <person name="Fritz C."/>
            <person name="Fujita M."/>
            <person name="Fujita Y."/>
            <person name="Fuma S."/>
            <person name="Galizzi A."/>
            <person name="Galleron N."/>
            <person name="Ghim S.-Y."/>
            <person name="Glaser P."/>
            <person name="Goffeau A."/>
            <person name="Golightly E.J."/>
            <person name="Grandi G."/>
            <person name="Guiseppi G."/>
            <person name="Guy B.J."/>
            <person name="Haga K."/>
            <person name="Haiech J."/>
            <person name="Harwood C.R."/>
            <person name="Henaut A."/>
            <person name="Hilbert H."/>
            <person name="Holsappel S."/>
            <person name="Hosono S."/>
            <person name="Hullo M.-F."/>
            <person name="Itaya M."/>
            <person name="Jones L.-M."/>
            <person name="Joris B."/>
            <person name="Karamata D."/>
            <person name="Kasahara Y."/>
            <person name="Klaerr-Blanchard M."/>
            <person name="Klein C."/>
            <person name="Kobayashi Y."/>
            <person name="Koetter P."/>
            <person name="Koningstein G."/>
            <person name="Krogh S."/>
            <person name="Kumano M."/>
            <person name="Kurita K."/>
            <person name="Lapidus A."/>
            <person name="Lardinois S."/>
            <person name="Lauber J."/>
            <person name="Lazarevic V."/>
            <person name="Lee S.-M."/>
            <person name="Levine A."/>
            <person name="Liu H."/>
            <person name="Masuda S."/>
            <person name="Mauel C."/>
            <person name="Medigue C."/>
            <person name="Medina N."/>
            <person name="Mellado R.P."/>
            <person name="Mizuno M."/>
            <person name="Moestl D."/>
            <person name="Nakai S."/>
            <person name="Noback M."/>
            <person name="Noone D."/>
            <person name="O'Reilly M."/>
            <person name="Ogawa K."/>
            <person name="Ogiwara A."/>
            <person name="Oudega B."/>
            <person name="Park S.-H."/>
            <person name="Parro V."/>
            <person name="Pohl T.M."/>
            <person name="Portetelle D."/>
            <person name="Porwollik S."/>
            <person name="Prescott A.M."/>
            <person name="Presecan E."/>
            <person name="Pujic P."/>
            <person name="Purnelle B."/>
            <person name="Rapoport G."/>
            <person name="Rey M."/>
            <person name="Reynolds S."/>
            <person name="Rieger M."/>
            <person name="Rivolta C."/>
            <person name="Rocha E."/>
            <person name="Roche B."/>
            <person name="Rose M."/>
            <person name="Sadaie Y."/>
            <person name="Sato T."/>
            <person name="Scanlan E."/>
            <person name="Schleich S."/>
            <person name="Schroeter R."/>
            <person name="Scoffone F."/>
            <person name="Sekiguchi J."/>
            <person name="Sekowska A."/>
            <person name="Seror S.J."/>
            <person name="Serror P."/>
            <person name="Shin B.-S."/>
            <person name="Soldo B."/>
            <person name="Sorokin A."/>
            <person name="Tacconi E."/>
            <person name="Takagi T."/>
            <person name="Takahashi H."/>
            <person name="Takemaru K."/>
            <person name="Takeuchi M."/>
            <person name="Tamakoshi A."/>
            <person name="Tanaka T."/>
            <person name="Terpstra P."/>
            <person name="Tognoni A."/>
            <person name="Tosato V."/>
            <person name="Uchiyama S."/>
            <person name="Vandenbol M."/>
            <person name="Vannier F."/>
            <person name="Vassarotti A."/>
            <person name="Viari A."/>
            <person name="Wambutt R."/>
            <person name="Wedler E."/>
            <person name="Wedler H."/>
            <person name="Weitzenegger T."/>
            <person name="Winters P."/>
            <person name="Wipat A."/>
            <person name="Yamamoto H."/>
            <person name="Yamane K."/>
            <person name="Yasumoto K."/>
            <person name="Yata K."/>
            <person name="Yoshida K."/>
            <person name="Yoshikawa H.-F."/>
            <person name="Zumstein E."/>
            <person name="Yoshikawa H."/>
            <person name="Danchin A."/>
        </authorList>
    </citation>
    <scope>NUCLEOTIDE SEQUENCE [LARGE SCALE GENOMIC DNA]</scope>
    <source>
        <strain>168</strain>
    </source>
</reference>
<reference key="3">
    <citation type="journal article" date="1997" name="J. Bacteriol.">
        <title>Identification and characterization of the ccdA gene, required for cytochrome c synthesis in Bacillus subtilis.</title>
        <authorList>
            <person name="Schioett T."/>
            <person name="von Wachenfeldt C."/>
            <person name="Hederstedt L."/>
        </authorList>
    </citation>
    <scope>NUCLEOTIDE SEQUENCE [GENOMIC DNA] OF 41-142</scope>
    <source>
        <strain>168</strain>
    </source>
</reference>
<reference key="4">
    <citation type="journal article" date="2012" name="Commun. Integr. Biol.">
        <title>Identification of interaction partners of the dynamin-like protein DynA from Bacillus subtilis.</title>
        <authorList>
            <person name="Buermann F."/>
            <person name="Sawant P."/>
            <person name="Bramkamp M."/>
        </authorList>
    </citation>
    <scope>INTERACTION WITH DYNA</scope>
    <scope>SUBUNIT</scope>
    <scope>SUBCELLULAR LOCATION</scope>
    <source>
        <strain>168</strain>
    </source>
</reference>
<keyword id="KW-1003">Cell membrane</keyword>
<keyword id="KW-0472">Membrane</keyword>
<keyword id="KW-1185">Reference proteome</keyword>
<keyword id="KW-0812">Transmembrane</keyword>
<keyword id="KW-1133">Transmembrane helix</keyword>
<accession>P45711</accession>
<comment type="subunit">
    <text evidence="2">Interacts with the N-terminal D1 domain of dynamin-like protein DynA.</text>
</comment>
<comment type="subcellular location">
    <subcellularLocation>
        <location evidence="2">Cell membrane</location>
        <topology evidence="1">Single-pass membrane protein</topology>
    </subcellularLocation>
    <text evidence="2">Forms foci, some at cell poles, some at midcell possibly at septation sites; in the absence of minJ foci are lost.</text>
</comment>
<protein>
    <recommendedName>
        <fullName>Membrane protein YneK</fullName>
    </recommendedName>
</protein>
<sequence length="142" mass="16989">MLEGWFLWFILFWVIMMVVLLSIGGFFMFRKFLKRLPKEDGRSELDWQDYYIENSRHLWNDENKQFLDELTAPVPELFRDAAKAKIAGKIGELALKEKVAKIDQQLMIKGYILATPKRDHTFLKRHLRDKKIDLEPYQTLLK</sequence>
<organism>
    <name type="scientific">Bacillus subtilis (strain 168)</name>
    <dbReference type="NCBI Taxonomy" id="224308"/>
    <lineage>
        <taxon>Bacteria</taxon>
        <taxon>Bacillati</taxon>
        <taxon>Bacillota</taxon>
        <taxon>Bacilli</taxon>
        <taxon>Bacillales</taxon>
        <taxon>Bacillaceae</taxon>
        <taxon>Bacillus</taxon>
    </lineage>
</organism>
<name>YNEK_BACSU</name>
<evidence type="ECO:0000255" key="1"/>
<evidence type="ECO:0000269" key="2">
    <source>
    </source>
</evidence>
<feature type="chain" id="PRO_0000049648" description="Membrane protein YneK">
    <location>
        <begin position="1"/>
        <end position="142"/>
    </location>
</feature>
<feature type="transmembrane region" description="Helical" evidence="1">
    <location>
        <begin position="6"/>
        <end position="26"/>
    </location>
</feature>
<gene>
    <name type="primary">yneK</name>
    <name type="synonym">yoxJ</name>
    <name type="ordered locus">BSU17960</name>
</gene>